<reference key="1">
    <citation type="journal article" date="2006" name="BMC Genomics">
        <title>The genome of the square archaeon Haloquadratum walsbyi: life at the limits of water activity.</title>
        <authorList>
            <person name="Bolhuis H."/>
            <person name="Palm P."/>
            <person name="Wende A."/>
            <person name="Falb M."/>
            <person name="Rampp M."/>
            <person name="Rodriguez-Valera F."/>
            <person name="Pfeiffer F."/>
            <person name="Oesterhelt D."/>
        </authorList>
    </citation>
    <scope>NUCLEOTIDE SEQUENCE [LARGE SCALE GENOMIC DNA]</scope>
    <source>
        <strain>DSM 16790 / HBSQ001</strain>
    </source>
</reference>
<feature type="chain" id="PRO_1000070577" description="Archaemetzincin">
    <location>
        <begin position="1"/>
        <end position="173"/>
    </location>
</feature>
<feature type="active site" description="Proton acceptor" evidence="1">
    <location>
        <position position="131"/>
    </location>
</feature>
<feature type="binding site" evidence="1">
    <location>
        <position position="130"/>
    </location>
    <ligand>
        <name>Zn(2+)</name>
        <dbReference type="ChEBI" id="CHEBI:29105"/>
        <label>1</label>
        <note>catalytic</note>
    </ligand>
</feature>
<feature type="binding site" evidence="1">
    <location>
        <position position="134"/>
    </location>
    <ligand>
        <name>Zn(2+)</name>
        <dbReference type="ChEBI" id="CHEBI:29105"/>
        <label>1</label>
        <note>catalytic</note>
    </ligand>
</feature>
<feature type="binding site" evidence="1">
    <location>
        <position position="140"/>
    </location>
    <ligand>
        <name>Zn(2+)</name>
        <dbReference type="ChEBI" id="CHEBI:29105"/>
        <label>1</label>
        <note>catalytic</note>
    </ligand>
</feature>
<feature type="binding site" evidence="1">
    <location>
        <position position="141"/>
    </location>
    <ligand>
        <name>Zn(2+)</name>
        <dbReference type="ChEBI" id="CHEBI:29105"/>
        <label>2</label>
    </ligand>
</feature>
<feature type="binding site" evidence="1">
    <location>
        <position position="146"/>
    </location>
    <ligand>
        <name>Zn(2+)</name>
        <dbReference type="ChEBI" id="CHEBI:29105"/>
        <label>2</label>
    </ligand>
</feature>
<feature type="binding site" evidence="1">
    <location>
        <position position="165"/>
    </location>
    <ligand>
        <name>Zn(2+)</name>
        <dbReference type="ChEBI" id="CHEBI:29105"/>
        <label>2</label>
    </ligand>
</feature>
<feature type="binding site" evidence="1">
    <location>
        <position position="168"/>
    </location>
    <ligand>
        <name>Zn(2+)</name>
        <dbReference type="ChEBI" id="CHEBI:29105"/>
        <label>2</label>
    </ligand>
</feature>
<name>AMZA_HALWD</name>
<gene>
    <name evidence="1" type="primary">amzA</name>
    <name type="ordered locus">HQ_1374A</name>
</gene>
<proteinExistence type="inferred from homology"/>
<organism>
    <name type="scientific">Haloquadratum walsbyi (strain DSM 16790 / HBSQ001)</name>
    <dbReference type="NCBI Taxonomy" id="362976"/>
    <lineage>
        <taxon>Archaea</taxon>
        <taxon>Methanobacteriati</taxon>
        <taxon>Methanobacteriota</taxon>
        <taxon>Stenosarchaea group</taxon>
        <taxon>Halobacteria</taxon>
        <taxon>Halobacteriales</taxon>
        <taxon>Haloferacaceae</taxon>
        <taxon>Haloquadratum</taxon>
    </lineage>
</organism>
<sequence>MLVDIVPIGDLPAQVKREASAALRGVYECDVTVHEEQSIPDGAFDHSRSQYRAEQFIELASRIGSGEKNIGITAEDLYYRRRNYVFGLAYLNGNGSVISTYRLQTSSDGGLKSKSPDAVFADRIRKEVVHEIGHTFGLEHCDNSKCVMSFSPTVREVDVKEENLCGSCNRLLY</sequence>
<accession>Q18KE9</accession>
<comment type="function">
    <text evidence="1">Probable zinc metalloprotease whose natural substrate is unknown.</text>
</comment>
<comment type="cofactor">
    <cofactor evidence="1">
        <name>Zn(2+)</name>
        <dbReference type="ChEBI" id="CHEBI:29105"/>
    </cofactor>
    <text evidence="1">Binds 2 Zn(2+) ions per subunit. One is catalytic, whereas the other seems to have a structural role.</text>
</comment>
<comment type="subunit">
    <text evidence="1">Monomer.</text>
</comment>
<comment type="similarity">
    <text evidence="1">Belongs to the peptidase M54 family.</text>
</comment>
<keyword id="KW-0378">Hydrolase</keyword>
<keyword id="KW-0479">Metal-binding</keyword>
<keyword id="KW-0482">Metalloprotease</keyword>
<keyword id="KW-0645">Protease</keyword>
<keyword id="KW-1185">Reference proteome</keyword>
<keyword id="KW-0862">Zinc</keyword>
<evidence type="ECO:0000255" key="1">
    <source>
        <dbReference type="HAMAP-Rule" id="MF_01842"/>
    </source>
</evidence>
<dbReference type="EC" id="3.4.-.-" evidence="1"/>
<dbReference type="EMBL" id="AM180088">
    <property type="protein sequence ID" value="CAJ51502.1"/>
    <property type="molecule type" value="Genomic_DNA"/>
</dbReference>
<dbReference type="RefSeq" id="WP_011570657.1">
    <property type="nucleotide sequence ID" value="NC_008212.1"/>
</dbReference>
<dbReference type="SMR" id="Q18KE9"/>
<dbReference type="STRING" id="362976.HQ_1374A"/>
<dbReference type="GeneID" id="4192283"/>
<dbReference type="KEGG" id="hwa:HQ_1374A"/>
<dbReference type="eggNOG" id="arCOG00458">
    <property type="taxonomic scope" value="Archaea"/>
</dbReference>
<dbReference type="HOGENOM" id="CLU_108521_2_0_2"/>
<dbReference type="Proteomes" id="UP000001975">
    <property type="component" value="Chromosome"/>
</dbReference>
<dbReference type="GO" id="GO:0008237">
    <property type="term" value="F:metallopeptidase activity"/>
    <property type="evidence" value="ECO:0007669"/>
    <property type="project" value="UniProtKB-UniRule"/>
</dbReference>
<dbReference type="GO" id="GO:0008270">
    <property type="term" value="F:zinc ion binding"/>
    <property type="evidence" value="ECO:0007669"/>
    <property type="project" value="UniProtKB-UniRule"/>
</dbReference>
<dbReference type="GO" id="GO:0006508">
    <property type="term" value="P:proteolysis"/>
    <property type="evidence" value="ECO:0007669"/>
    <property type="project" value="UniProtKB-UniRule"/>
</dbReference>
<dbReference type="CDD" id="cd11375">
    <property type="entry name" value="Peptidase_M54"/>
    <property type="match status" value="1"/>
</dbReference>
<dbReference type="Gene3D" id="3.40.390.10">
    <property type="entry name" value="Collagenase (Catalytic Domain)"/>
    <property type="match status" value="1"/>
</dbReference>
<dbReference type="HAMAP" id="MF_01842">
    <property type="entry name" value="Archaemetzincin"/>
    <property type="match status" value="1"/>
</dbReference>
<dbReference type="InterPro" id="IPR024079">
    <property type="entry name" value="MetalloPept_cat_dom_sf"/>
</dbReference>
<dbReference type="InterPro" id="IPR012962">
    <property type="entry name" value="Pept_M54_archaemetzincn"/>
</dbReference>
<dbReference type="InterPro" id="IPR012091">
    <property type="entry name" value="Pept_M54_archaemetzncn_arc/bac"/>
</dbReference>
<dbReference type="NCBIfam" id="NF033823">
    <property type="entry name" value="archmetzin"/>
    <property type="match status" value="1"/>
</dbReference>
<dbReference type="PANTHER" id="PTHR15910">
    <property type="entry name" value="ARCHAEMETZINCIN"/>
    <property type="match status" value="1"/>
</dbReference>
<dbReference type="PANTHER" id="PTHR15910:SF1">
    <property type="entry name" value="ARCHAEMETZINCIN-2"/>
    <property type="match status" value="1"/>
</dbReference>
<dbReference type="Pfam" id="PF07998">
    <property type="entry name" value="Peptidase_M54"/>
    <property type="match status" value="1"/>
</dbReference>
<dbReference type="PIRSF" id="PIRSF005785">
    <property type="entry name" value="Zn-prot_arch"/>
    <property type="match status" value="1"/>
</dbReference>
<dbReference type="SUPFAM" id="SSF55486">
    <property type="entry name" value="Metalloproteases ('zincins'), catalytic domain"/>
    <property type="match status" value="1"/>
</dbReference>
<protein>
    <recommendedName>
        <fullName evidence="1">Archaemetzincin</fullName>
        <ecNumber evidence="1">3.4.-.-</ecNumber>
    </recommendedName>
</protein>